<accession>Q1I4F3</accession>
<evidence type="ECO:0000255" key="1">
    <source>
        <dbReference type="HAMAP-Rule" id="MF_00658"/>
    </source>
</evidence>
<comment type="function">
    <text evidence="1">Specifically methylates the pseudouridine at position 1915 (m3Psi1915) in 23S rRNA.</text>
</comment>
<comment type="catalytic activity">
    <reaction evidence="1">
        <text>pseudouridine(1915) in 23S rRNA + S-adenosyl-L-methionine = N(3)-methylpseudouridine(1915) in 23S rRNA + S-adenosyl-L-homocysteine + H(+)</text>
        <dbReference type="Rhea" id="RHEA:42752"/>
        <dbReference type="Rhea" id="RHEA-COMP:10221"/>
        <dbReference type="Rhea" id="RHEA-COMP:10222"/>
        <dbReference type="ChEBI" id="CHEBI:15378"/>
        <dbReference type="ChEBI" id="CHEBI:57856"/>
        <dbReference type="ChEBI" id="CHEBI:59789"/>
        <dbReference type="ChEBI" id="CHEBI:65314"/>
        <dbReference type="ChEBI" id="CHEBI:74486"/>
        <dbReference type="EC" id="2.1.1.177"/>
    </reaction>
</comment>
<comment type="subunit">
    <text evidence="1">Homodimer.</text>
</comment>
<comment type="subcellular location">
    <subcellularLocation>
        <location evidence="1">Cytoplasm</location>
    </subcellularLocation>
</comment>
<comment type="similarity">
    <text evidence="1">Belongs to the RNA methyltransferase RlmH family.</text>
</comment>
<keyword id="KW-0963">Cytoplasm</keyword>
<keyword id="KW-0489">Methyltransferase</keyword>
<keyword id="KW-0698">rRNA processing</keyword>
<keyword id="KW-0949">S-adenosyl-L-methionine</keyword>
<keyword id="KW-0808">Transferase</keyword>
<reference key="1">
    <citation type="journal article" date="2006" name="Nat. Biotechnol.">
        <title>Complete genome sequence of the entomopathogenic and metabolically versatile soil bacterium Pseudomonas entomophila.</title>
        <authorList>
            <person name="Vodovar N."/>
            <person name="Vallenet D."/>
            <person name="Cruveiller S."/>
            <person name="Rouy Z."/>
            <person name="Barbe V."/>
            <person name="Acosta C."/>
            <person name="Cattolico L."/>
            <person name="Jubin C."/>
            <person name="Lajus A."/>
            <person name="Segurens B."/>
            <person name="Vacherie B."/>
            <person name="Wincker P."/>
            <person name="Weissenbach J."/>
            <person name="Lemaitre B."/>
            <person name="Medigue C."/>
            <person name="Boccard F."/>
        </authorList>
    </citation>
    <scope>NUCLEOTIDE SEQUENCE [LARGE SCALE GENOMIC DNA]</scope>
    <source>
        <strain>L48</strain>
    </source>
</reference>
<feature type="chain" id="PRO_1000061826" description="Ribosomal RNA large subunit methyltransferase H">
    <location>
        <begin position="1"/>
        <end position="155"/>
    </location>
</feature>
<feature type="binding site" evidence="1">
    <location>
        <position position="73"/>
    </location>
    <ligand>
        <name>S-adenosyl-L-methionine</name>
        <dbReference type="ChEBI" id="CHEBI:59789"/>
    </ligand>
</feature>
<feature type="binding site" evidence="1">
    <location>
        <position position="104"/>
    </location>
    <ligand>
        <name>S-adenosyl-L-methionine</name>
        <dbReference type="ChEBI" id="CHEBI:59789"/>
    </ligand>
</feature>
<feature type="binding site" evidence="1">
    <location>
        <begin position="123"/>
        <end position="128"/>
    </location>
    <ligand>
        <name>S-adenosyl-L-methionine</name>
        <dbReference type="ChEBI" id="CHEBI:59789"/>
    </ligand>
</feature>
<sequence>MRLRLIAVGSRMPKWVEEGWHEYAKRLPSELALELVEIPLNTRGKNADVARLIRQEGEAMLSKVQPGERIVTLEVHGKPWSTEQLAGELDRWRLDARTVNLMVGGPEGLAPEVCARSEQRWSLSPLTLPHPLVRILIGEQIYRAWTVLSGHPYHK</sequence>
<dbReference type="EC" id="2.1.1.177" evidence="1"/>
<dbReference type="EMBL" id="CT573326">
    <property type="protein sequence ID" value="CAK17483.1"/>
    <property type="molecule type" value="Genomic_DNA"/>
</dbReference>
<dbReference type="RefSeq" id="WP_011535845.1">
    <property type="nucleotide sequence ID" value="NC_008027.1"/>
</dbReference>
<dbReference type="SMR" id="Q1I4F3"/>
<dbReference type="STRING" id="384676.PSEEN4827"/>
<dbReference type="GeneID" id="32807786"/>
<dbReference type="KEGG" id="pen:PSEEN4827"/>
<dbReference type="eggNOG" id="COG1576">
    <property type="taxonomic scope" value="Bacteria"/>
</dbReference>
<dbReference type="HOGENOM" id="CLU_100552_1_0_6"/>
<dbReference type="OrthoDB" id="9806643at2"/>
<dbReference type="Proteomes" id="UP000000658">
    <property type="component" value="Chromosome"/>
</dbReference>
<dbReference type="GO" id="GO:0005737">
    <property type="term" value="C:cytoplasm"/>
    <property type="evidence" value="ECO:0007669"/>
    <property type="project" value="UniProtKB-SubCell"/>
</dbReference>
<dbReference type="GO" id="GO:0070038">
    <property type="term" value="F:rRNA (pseudouridine-N3-)-methyltransferase activity"/>
    <property type="evidence" value="ECO:0007669"/>
    <property type="project" value="UniProtKB-UniRule"/>
</dbReference>
<dbReference type="CDD" id="cd18081">
    <property type="entry name" value="RlmH-like"/>
    <property type="match status" value="1"/>
</dbReference>
<dbReference type="Gene3D" id="3.40.1280.10">
    <property type="match status" value="1"/>
</dbReference>
<dbReference type="HAMAP" id="MF_00658">
    <property type="entry name" value="23SrRNA_methyltr_H"/>
    <property type="match status" value="1"/>
</dbReference>
<dbReference type="InterPro" id="IPR029028">
    <property type="entry name" value="Alpha/beta_knot_MTases"/>
</dbReference>
<dbReference type="InterPro" id="IPR003742">
    <property type="entry name" value="RlmH-like"/>
</dbReference>
<dbReference type="InterPro" id="IPR029026">
    <property type="entry name" value="tRNA_m1G_MTases_N"/>
</dbReference>
<dbReference type="NCBIfam" id="NF000986">
    <property type="entry name" value="PRK00103.1-4"/>
    <property type="match status" value="1"/>
</dbReference>
<dbReference type="NCBIfam" id="TIGR00246">
    <property type="entry name" value="tRNA_RlmH_YbeA"/>
    <property type="match status" value="1"/>
</dbReference>
<dbReference type="PANTHER" id="PTHR33603">
    <property type="entry name" value="METHYLTRANSFERASE"/>
    <property type="match status" value="1"/>
</dbReference>
<dbReference type="PANTHER" id="PTHR33603:SF1">
    <property type="entry name" value="RIBOSOMAL RNA LARGE SUBUNIT METHYLTRANSFERASE H"/>
    <property type="match status" value="1"/>
</dbReference>
<dbReference type="Pfam" id="PF02590">
    <property type="entry name" value="SPOUT_MTase"/>
    <property type="match status" value="1"/>
</dbReference>
<dbReference type="PIRSF" id="PIRSF004505">
    <property type="entry name" value="MT_bac"/>
    <property type="match status" value="1"/>
</dbReference>
<dbReference type="SUPFAM" id="SSF75217">
    <property type="entry name" value="alpha/beta knot"/>
    <property type="match status" value="1"/>
</dbReference>
<proteinExistence type="inferred from homology"/>
<protein>
    <recommendedName>
        <fullName evidence="1">Ribosomal RNA large subunit methyltransferase H</fullName>
        <ecNumber evidence="1">2.1.1.177</ecNumber>
    </recommendedName>
    <alternativeName>
        <fullName evidence="1">23S rRNA (pseudouridine1915-N3)-methyltransferase</fullName>
    </alternativeName>
    <alternativeName>
        <fullName evidence="1">23S rRNA m3Psi1915 methyltransferase</fullName>
    </alternativeName>
    <alternativeName>
        <fullName evidence="1">rRNA (pseudouridine-N3-)-methyltransferase RlmH</fullName>
    </alternativeName>
</protein>
<organism>
    <name type="scientific">Pseudomonas entomophila (strain L48)</name>
    <dbReference type="NCBI Taxonomy" id="384676"/>
    <lineage>
        <taxon>Bacteria</taxon>
        <taxon>Pseudomonadati</taxon>
        <taxon>Pseudomonadota</taxon>
        <taxon>Gammaproteobacteria</taxon>
        <taxon>Pseudomonadales</taxon>
        <taxon>Pseudomonadaceae</taxon>
        <taxon>Pseudomonas</taxon>
    </lineage>
</organism>
<name>RLMH_PSEE4</name>
<gene>
    <name evidence="1" type="primary">rlmH</name>
    <name type="ordered locus">PSEEN4827</name>
</gene>